<gene>
    <name type="primary">MT1D</name>
</gene>
<proteinExistence type="inferred from homology"/>
<accession>P79377</accession>
<evidence type="ECO:0000250" key="1"/>
<evidence type="ECO:0000250" key="2">
    <source>
        <dbReference type="UniProtKB" id="P02795"/>
    </source>
</evidence>
<evidence type="ECO:0000305" key="3"/>
<protein>
    <recommendedName>
        <fullName>Metallothionein-1D</fullName>
        <shortName>MT-1D</shortName>
    </recommendedName>
    <alternativeName>
        <fullName>Metallothionein-ID</fullName>
        <shortName>MT-ID</shortName>
    </alternativeName>
</protein>
<organism>
    <name type="scientific">Sus scrofa</name>
    <name type="common">Pig</name>
    <dbReference type="NCBI Taxonomy" id="9823"/>
    <lineage>
        <taxon>Eukaryota</taxon>
        <taxon>Metazoa</taxon>
        <taxon>Chordata</taxon>
        <taxon>Craniata</taxon>
        <taxon>Vertebrata</taxon>
        <taxon>Euteleostomi</taxon>
        <taxon>Mammalia</taxon>
        <taxon>Eutheria</taxon>
        <taxon>Laurasiatheria</taxon>
        <taxon>Artiodactyla</taxon>
        <taxon>Suina</taxon>
        <taxon>Suidae</taxon>
        <taxon>Sus</taxon>
    </lineage>
</organism>
<keyword id="KW-0479">Metal-binding</keyword>
<keyword id="KW-0480">Metal-thiolate cluster</keyword>
<keyword id="KW-1185">Reference proteome</keyword>
<dbReference type="EMBL" id="AB000789">
    <property type="protein sequence ID" value="BAA19179.1"/>
    <property type="molecule type" value="mRNA"/>
</dbReference>
<dbReference type="SMR" id="P79377"/>
<dbReference type="FunCoup" id="P79377">
    <property type="interactions" value="5"/>
</dbReference>
<dbReference type="PeptideAtlas" id="P79377"/>
<dbReference type="InParanoid" id="P79377"/>
<dbReference type="Proteomes" id="UP000008227">
    <property type="component" value="Unplaced"/>
</dbReference>
<dbReference type="Proteomes" id="UP000314985">
    <property type="component" value="Unplaced"/>
</dbReference>
<dbReference type="Proteomes" id="UP000694570">
    <property type="component" value="Unplaced"/>
</dbReference>
<dbReference type="Proteomes" id="UP000694571">
    <property type="component" value="Unplaced"/>
</dbReference>
<dbReference type="Proteomes" id="UP000694720">
    <property type="component" value="Unplaced"/>
</dbReference>
<dbReference type="Proteomes" id="UP000694722">
    <property type="component" value="Unplaced"/>
</dbReference>
<dbReference type="Proteomes" id="UP000694723">
    <property type="component" value="Unplaced"/>
</dbReference>
<dbReference type="Proteomes" id="UP000694724">
    <property type="component" value="Unplaced"/>
</dbReference>
<dbReference type="Proteomes" id="UP000694725">
    <property type="component" value="Unplaced"/>
</dbReference>
<dbReference type="Proteomes" id="UP000694726">
    <property type="component" value="Unplaced"/>
</dbReference>
<dbReference type="Proteomes" id="UP000694727">
    <property type="component" value="Unplaced"/>
</dbReference>
<dbReference type="Proteomes" id="UP000694728">
    <property type="component" value="Unplaced"/>
</dbReference>
<dbReference type="GO" id="GO:0005737">
    <property type="term" value="C:cytoplasm"/>
    <property type="evidence" value="ECO:0000250"/>
    <property type="project" value="UniProtKB"/>
</dbReference>
<dbReference type="GO" id="GO:0005634">
    <property type="term" value="C:nucleus"/>
    <property type="evidence" value="ECO:0000250"/>
    <property type="project" value="UniProtKB"/>
</dbReference>
<dbReference type="GO" id="GO:0046872">
    <property type="term" value="F:metal ion binding"/>
    <property type="evidence" value="ECO:0000318"/>
    <property type="project" value="GO_Central"/>
</dbReference>
<dbReference type="GO" id="GO:0008270">
    <property type="term" value="F:zinc ion binding"/>
    <property type="evidence" value="ECO:0000250"/>
    <property type="project" value="UniProtKB"/>
</dbReference>
<dbReference type="GO" id="GO:0071276">
    <property type="term" value="P:cellular response to cadmium ion"/>
    <property type="evidence" value="ECO:0000318"/>
    <property type="project" value="GO_Central"/>
</dbReference>
<dbReference type="GO" id="GO:0071280">
    <property type="term" value="P:cellular response to copper ion"/>
    <property type="evidence" value="ECO:0000318"/>
    <property type="project" value="GO_Central"/>
</dbReference>
<dbReference type="GO" id="GO:0071294">
    <property type="term" value="P:cellular response to zinc ion"/>
    <property type="evidence" value="ECO:0000250"/>
    <property type="project" value="UniProtKB"/>
</dbReference>
<dbReference type="GO" id="GO:0010273">
    <property type="term" value="P:detoxification of copper ion"/>
    <property type="evidence" value="ECO:0000318"/>
    <property type="project" value="GO_Central"/>
</dbReference>
<dbReference type="GO" id="GO:0006882">
    <property type="term" value="P:intracellular zinc ion homeostasis"/>
    <property type="evidence" value="ECO:0000318"/>
    <property type="project" value="GO_Central"/>
</dbReference>
<dbReference type="GO" id="GO:0045926">
    <property type="term" value="P:negative regulation of growth"/>
    <property type="evidence" value="ECO:0000250"/>
    <property type="project" value="UniProtKB"/>
</dbReference>
<dbReference type="FunFam" id="4.10.10.10:FF:000001">
    <property type="entry name" value="Metallothionein"/>
    <property type="match status" value="1"/>
</dbReference>
<dbReference type="Gene3D" id="4.10.10.10">
    <property type="entry name" value="Metallothionein Isoform II"/>
    <property type="match status" value="1"/>
</dbReference>
<dbReference type="InterPro" id="IPR017854">
    <property type="entry name" value="Metalthion_dom_sf"/>
</dbReference>
<dbReference type="InterPro" id="IPR023587">
    <property type="entry name" value="Metalthion_dom_sf_vert"/>
</dbReference>
<dbReference type="InterPro" id="IPR000006">
    <property type="entry name" value="Metalthion_vert"/>
</dbReference>
<dbReference type="InterPro" id="IPR018064">
    <property type="entry name" value="Metalthion_vert_metal_BS"/>
</dbReference>
<dbReference type="PANTHER" id="PTHR23299">
    <property type="entry name" value="METALLOTHIONEIN"/>
    <property type="match status" value="1"/>
</dbReference>
<dbReference type="PANTHER" id="PTHR23299:SF22">
    <property type="entry name" value="METALLOTHIONEIN-1G"/>
    <property type="match status" value="1"/>
</dbReference>
<dbReference type="Pfam" id="PF00131">
    <property type="entry name" value="Metallothio"/>
    <property type="match status" value="1"/>
</dbReference>
<dbReference type="PRINTS" id="PR00860">
    <property type="entry name" value="MTVERTEBRATE"/>
</dbReference>
<dbReference type="SUPFAM" id="SSF57868">
    <property type="entry name" value="Metallothionein"/>
    <property type="match status" value="1"/>
</dbReference>
<dbReference type="PROSITE" id="PS00203">
    <property type="entry name" value="METALLOTHIONEIN_VRT"/>
    <property type="match status" value="1"/>
</dbReference>
<feature type="chain" id="PRO_0000197210" description="Metallothionein-1D">
    <location>
        <begin position="1"/>
        <end position="61"/>
    </location>
</feature>
<feature type="region of interest" description="Beta">
    <location>
        <begin position="1"/>
        <end position="29"/>
    </location>
</feature>
<feature type="region of interest" description="Alpha">
    <location>
        <begin position="30"/>
        <end position="61"/>
    </location>
</feature>
<feature type="binding site" evidence="2">
    <location>
        <position position="5"/>
    </location>
    <ligand>
        <name>a divalent metal cation</name>
        <dbReference type="ChEBI" id="CHEBI:60240"/>
        <label>1</label>
        <note>in cluster B</note>
    </ligand>
</feature>
<feature type="binding site" evidence="2">
    <location>
        <position position="7"/>
    </location>
    <ligand>
        <name>a divalent metal cation</name>
        <dbReference type="ChEBI" id="CHEBI:60240"/>
        <label>1</label>
        <note>in cluster B</note>
    </ligand>
</feature>
<feature type="binding site" evidence="2">
    <location>
        <position position="7"/>
    </location>
    <ligand>
        <name>a divalent metal cation</name>
        <dbReference type="ChEBI" id="CHEBI:60240"/>
        <label>2</label>
        <note>in cluster B</note>
    </ligand>
</feature>
<feature type="binding site" evidence="2">
    <location>
        <position position="13"/>
    </location>
    <ligand>
        <name>a divalent metal cation</name>
        <dbReference type="ChEBI" id="CHEBI:60240"/>
        <label>2</label>
        <note>in cluster B</note>
    </ligand>
</feature>
<feature type="binding site" evidence="2">
    <location>
        <position position="15"/>
    </location>
    <ligand>
        <name>a divalent metal cation</name>
        <dbReference type="ChEBI" id="CHEBI:60240"/>
        <label>2</label>
        <note>in cluster B</note>
    </ligand>
</feature>
<feature type="binding site" evidence="2">
    <location>
        <position position="15"/>
    </location>
    <ligand>
        <name>a divalent metal cation</name>
        <dbReference type="ChEBI" id="CHEBI:60240"/>
        <label>3</label>
        <note>in cluster B</note>
    </ligand>
</feature>
<feature type="binding site" evidence="2">
    <location>
        <position position="19"/>
    </location>
    <ligand>
        <name>a divalent metal cation</name>
        <dbReference type="ChEBI" id="CHEBI:60240"/>
        <label>3</label>
        <note>in cluster B</note>
    </ligand>
</feature>
<feature type="binding site" evidence="2">
    <location>
        <position position="21"/>
    </location>
    <ligand>
        <name>a divalent metal cation</name>
        <dbReference type="ChEBI" id="CHEBI:60240"/>
        <label>1</label>
        <note>in cluster B</note>
    </ligand>
</feature>
<feature type="binding site" evidence="2">
    <location>
        <position position="24"/>
    </location>
    <ligand>
        <name>a divalent metal cation</name>
        <dbReference type="ChEBI" id="CHEBI:60240"/>
        <label>1</label>
        <note>in cluster B</note>
    </ligand>
</feature>
<feature type="binding site" evidence="2">
    <location>
        <position position="24"/>
    </location>
    <ligand>
        <name>a divalent metal cation</name>
        <dbReference type="ChEBI" id="CHEBI:60240"/>
        <label>3</label>
        <note>in cluster B</note>
    </ligand>
</feature>
<feature type="binding site" evidence="2">
    <location>
        <position position="26"/>
    </location>
    <ligand>
        <name>a divalent metal cation</name>
        <dbReference type="ChEBI" id="CHEBI:60240"/>
        <label>2</label>
        <note>in cluster B</note>
    </ligand>
</feature>
<feature type="binding site" evidence="2">
    <location>
        <position position="29"/>
    </location>
    <ligand>
        <name>a divalent metal cation</name>
        <dbReference type="ChEBI" id="CHEBI:60240"/>
        <label>3</label>
        <note>in cluster B</note>
    </ligand>
</feature>
<feature type="binding site" evidence="2">
    <location>
        <position position="33"/>
    </location>
    <ligand>
        <name>a divalent metal cation</name>
        <dbReference type="ChEBI" id="CHEBI:60240"/>
        <label>4</label>
        <note>in cluster A</note>
    </ligand>
</feature>
<feature type="binding site" evidence="2">
    <location>
        <position position="34"/>
    </location>
    <ligand>
        <name>a divalent metal cation</name>
        <dbReference type="ChEBI" id="CHEBI:60240"/>
        <label>4</label>
        <note>in cluster A</note>
    </ligand>
</feature>
<feature type="binding site" evidence="2">
    <location>
        <position position="34"/>
    </location>
    <ligand>
        <name>a divalent metal cation</name>
        <dbReference type="ChEBI" id="CHEBI:60240"/>
        <label>5</label>
        <note>in cluster A</note>
    </ligand>
</feature>
<feature type="binding site" evidence="2">
    <location>
        <position position="36"/>
    </location>
    <ligand>
        <name>a divalent metal cation</name>
        <dbReference type="ChEBI" id="CHEBI:60240"/>
        <label>5</label>
        <note>in cluster A</note>
    </ligand>
</feature>
<feature type="binding site" evidence="2">
    <location>
        <position position="37"/>
    </location>
    <ligand>
        <name>a divalent metal cation</name>
        <dbReference type="ChEBI" id="CHEBI:60240"/>
        <label>5</label>
        <note>in cluster A</note>
    </ligand>
</feature>
<feature type="binding site" evidence="2">
    <location>
        <position position="37"/>
    </location>
    <ligand>
        <name>a divalent metal cation</name>
        <dbReference type="ChEBI" id="CHEBI:60240"/>
        <label>6</label>
        <note>in cluster A</note>
    </ligand>
</feature>
<feature type="binding site" evidence="2">
    <location>
        <position position="41"/>
    </location>
    <ligand>
        <name>a divalent metal cation</name>
        <dbReference type="ChEBI" id="CHEBI:60240"/>
        <label>6</label>
        <note>in cluster A</note>
    </ligand>
</feature>
<feature type="binding site" evidence="2">
    <location>
        <position position="44"/>
    </location>
    <ligand>
        <name>a divalent metal cation</name>
        <dbReference type="ChEBI" id="CHEBI:60240"/>
        <label>4</label>
        <note>in cluster A</note>
    </ligand>
</feature>
<feature type="binding site" evidence="2">
    <location>
        <position position="44"/>
    </location>
    <ligand>
        <name>a divalent metal cation</name>
        <dbReference type="ChEBI" id="CHEBI:60240"/>
        <label>6</label>
        <note>in cluster A</note>
    </ligand>
</feature>
<feature type="binding site" evidence="2">
    <location>
        <position position="48"/>
    </location>
    <ligand>
        <name>a divalent metal cation</name>
        <dbReference type="ChEBI" id="CHEBI:60240"/>
        <label>4</label>
        <note>in cluster A</note>
    </ligand>
</feature>
<feature type="binding site" evidence="2">
    <location>
        <position position="50"/>
    </location>
    <ligand>
        <name>a divalent metal cation</name>
        <dbReference type="ChEBI" id="CHEBI:60240"/>
        <label>5</label>
        <note>in cluster A</note>
    </ligand>
</feature>
<feature type="binding site" evidence="2">
    <location>
        <position position="50"/>
    </location>
    <ligand>
        <name>a divalent metal cation</name>
        <dbReference type="ChEBI" id="CHEBI:60240"/>
        <label>7</label>
        <note>in cluster A</note>
    </ligand>
</feature>
<feature type="binding site" evidence="2">
    <location>
        <position position="57"/>
    </location>
    <ligand>
        <name>a divalent metal cation</name>
        <dbReference type="ChEBI" id="CHEBI:60240"/>
        <label>7</label>
        <note>in cluster A</note>
    </ligand>
</feature>
<feature type="binding site" evidence="2">
    <location>
        <position position="59"/>
    </location>
    <ligand>
        <name>a divalent metal cation</name>
        <dbReference type="ChEBI" id="CHEBI:60240"/>
        <label>7</label>
        <note>in cluster A</note>
    </ligand>
</feature>
<feature type="binding site" evidence="2">
    <location>
        <position position="60"/>
    </location>
    <ligand>
        <name>a divalent metal cation</name>
        <dbReference type="ChEBI" id="CHEBI:60240"/>
        <label>6</label>
        <note>in cluster A</note>
    </ligand>
</feature>
<feature type="binding site" evidence="2">
    <location>
        <position position="60"/>
    </location>
    <ligand>
        <name>a divalent metal cation</name>
        <dbReference type="ChEBI" id="CHEBI:60240"/>
        <label>7</label>
        <note>in cluster A</note>
    </ligand>
</feature>
<feature type="unsure residue">
    <location>
        <begin position="49"/>
        <end position="61"/>
    </location>
</feature>
<reference key="1">
    <citation type="journal article" date="1998" name="Gene">
        <title>Multiple isoforms of metallothionein are expressed in the porcine liver.</title>
        <authorList>
            <person name="Huang M.-C."/>
            <person name="Pan P.K."/>
            <person name="Zheng T.F."/>
            <person name="Chen N.C."/>
            <person name="Peng J.Y."/>
            <person name="Huang P.C."/>
        </authorList>
    </citation>
    <scope>NUCLEOTIDE SEQUENCE [MRNA]</scope>
    <source>
        <tissue>Liver</tissue>
    </source>
</reference>
<sequence length="61" mass="5975">MDPNCSCSTGGSCSCATSCTCKACRCTSCKKSCCSCCPAGCAKCAQGCICKGASDKCSCCA</sequence>
<comment type="function">
    <text>Metallothioneins have a high content of cysteine residues that bind various heavy metals; these proteins are transcriptionally regulated by both heavy metals and glucocorticoids.</text>
</comment>
<comment type="subunit">
    <text evidence="1">Monomer.</text>
</comment>
<comment type="domain">
    <text>Class I metallothioneins contain 2 metal-binding domains: four divalent ions are chelated within cluster A of the alpha domain and are coordinated via cysteinyl thiolate bridges to 11 cysteine ligands. Cluster B, the corresponding region within the beta domain, can ligate three divalent ions to 9 cysteines.</text>
</comment>
<comment type="similarity">
    <text evidence="3">Belongs to the metallothionein superfamily. Type 1 family.</text>
</comment>
<name>MT1D_PIG</name>